<feature type="chain" id="PRO_0000249622" description="N-acetylmuramic acid 6-phosphate etherase 2">
    <location>
        <begin position="1"/>
        <end position="296"/>
    </location>
</feature>
<feature type="domain" description="SIS" evidence="1">
    <location>
        <begin position="55"/>
        <end position="218"/>
    </location>
</feature>
<feature type="active site" description="Proton donor" evidence="1">
    <location>
        <position position="83"/>
    </location>
</feature>
<feature type="active site" evidence="1">
    <location>
        <position position="114"/>
    </location>
</feature>
<gene>
    <name evidence="1" type="primary">murQ2</name>
    <name type="ordered locus">EF_2436</name>
</gene>
<protein>
    <recommendedName>
        <fullName evidence="1">N-acetylmuramic acid 6-phosphate etherase 2</fullName>
        <shortName evidence="1">MurNAc-6-P etherase 2</shortName>
        <ecNumber evidence="1">4.2.1.126</ecNumber>
    </recommendedName>
    <alternativeName>
        <fullName evidence="1">N-acetylmuramic acid 6-phosphate hydrolase 2</fullName>
    </alternativeName>
    <alternativeName>
        <fullName evidence="1">N-acetylmuramic acid 6-phosphate lyase 2</fullName>
    </alternativeName>
</protein>
<organism>
    <name type="scientific">Enterococcus faecalis (strain ATCC 700802 / V583)</name>
    <dbReference type="NCBI Taxonomy" id="226185"/>
    <lineage>
        <taxon>Bacteria</taxon>
        <taxon>Bacillati</taxon>
        <taxon>Bacillota</taxon>
        <taxon>Bacilli</taxon>
        <taxon>Lactobacillales</taxon>
        <taxon>Enterococcaceae</taxon>
        <taxon>Enterococcus</taxon>
    </lineage>
</organism>
<sequence>MNLENLTTERRNENTMGLDEMSVKEALQKMNQEDQKVAMAVGQELAAIEPVVEAIIKSFNQGGRLIYMGAGTSGRLGVLDAAECVPTFGVEPEMVQGLIAGGQKAMTVAVEGAEDSKELGRQDLVDLKLSANDIVVGIAASGRTPYVIGGLEYATTVGAATATVACNKNAEISKYAQMPIEVDAGPEFLTGSTRLKSGTAQKLILNMLSTISMIGIGKVYNNLMVDVKPTNEKLVERSKRIIMEATGCSYEVAELKFVEAEENVKLAIVMILTDSTKEEATQKLIDGNQFIKNTLN</sequence>
<evidence type="ECO:0000255" key="1">
    <source>
        <dbReference type="HAMAP-Rule" id="MF_00068"/>
    </source>
</evidence>
<keyword id="KW-0119">Carbohydrate metabolism</keyword>
<keyword id="KW-0456">Lyase</keyword>
<keyword id="KW-1185">Reference proteome</keyword>
<dbReference type="EC" id="4.2.1.126" evidence="1"/>
<dbReference type="EMBL" id="AE016830">
    <property type="protein sequence ID" value="AAO82154.1"/>
    <property type="molecule type" value="Genomic_DNA"/>
</dbReference>
<dbReference type="RefSeq" id="NP_816084.1">
    <property type="nucleotide sequence ID" value="NC_004668.1"/>
</dbReference>
<dbReference type="SMR" id="Q831R4"/>
<dbReference type="STRING" id="226185.EF_2436"/>
<dbReference type="EnsemblBacteria" id="AAO82154">
    <property type="protein sequence ID" value="AAO82154"/>
    <property type="gene ID" value="EF_2436"/>
</dbReference>
<dbReference type="KEGG" id="efa:EF2436"/>
<dbReference type="PATRIC" id="fig|226185.45.peg.1109"/>
<dbReference type="eggNOG" id="COG2103">
    <property type="taxonomic scope" value="Bacteria"/>
</dbReference>
<dbReference type="HOGENOM" id="CLU_049049_1_1_9"/>
<dbReference type="UniPathway" id="UPA00342"/>
<dbReference type="Proteomes" id="UP000001415">
    <property type="component" value="Chromosome"/>
</dbReference>
<dbReference type="GO" id="GO:0097367">
    <property type="term" value="F:carbohydrate derivative binding"/>
    <property type="evidence" value="ECO:0007669"/>
    <property type="project" value="InterPro"/>
</dbReference>
<dbReference type="GO" id="GO:0016835">
    <property type="term" value="F:carbon-oxygen lyase activity"/>
    <property type="evidence" value="ECO:0007669"/>
    <property type="project" value="UniProtKB-UniRule"/>
</dbReference>
<dbReference type="GO" id="GO:0016803">
    <property type="term" value="F:ether hydrolase activity"/>
    <property type="evidence" value="ECO:0007669"/>
    <property type="project" value="TreeGrafter"/>
</dbReference>
<dbReference type="GO" id="GO:0046348">
    <property type="term" value="P:amino sugar catabolic process"/>
    <property type="evidence" value="ECO:0007669"/>
    <property type="project" value="InterPro"/>
</dbReference>
<dbReference type="GO" id="GO:0097173">
    <property type="term" value="P:N-acetylmuramic acid catabolic process"/>
    <property type="evidence" value="ECO:0007669"/>
    <property type="project" value="UniProtKB-UniPathway"/>
</dbReference>
<dbReference type="GO" id="GO:0009254">
    <property type="term" value="P:peptidoglycan turnover"/>
    <property type="evidence" value="ECO:0007669"/>
    <property type="project" value="TreeGrafter"/>
</dbReference>
<dbReference type="CDD" id="cd05007">
    <property type="entry name" value="SIS_Etherase"/>
    <property type="match status" value="1"/>
</dbReference>
<dbReference type="FunFam" id="1.10.8.1080:FF:000001">
    <property type="entry name" value="N-acetylmuramic acid 6-phosphate etherase"/>
    <property type="match status" value="1"/>
</dbReference>
<dbReference type="FunFam" id="3.40.50.10490:FF:000014">
    <property type="entry name" value="N-acetylmuramic acid 6-phosphate etherase"/>
    <property type="match status" value="1"/>
</dbReference>
<dbReference type="Gene3D" id="1.10.8.1080">
    <property type="match status" value="1"/>
</dbReference>
<dbReference type="Gene3D" id="3.40.50.10490">
    <property type="entry name" value="Glucose-6-phosphate isomerase like protein, domain 1"/>
    <property type="match status" value="1"/>
</dbReference>
<dbReference type="HAMAP" id="MF_00068">
    <property type="entry name" value="MurQ"/>
    <property type="match status" value="1"/>
</dbReference>
<dbReference type="InterPro" id="IPR005488">
    <property type="entry name" value="Etherase_MurQ"/>
</dbReference>
<dbReference type="InterPro" id="IPR005486">
    <property type="entry name" value="Glucokinase_regulatory_CS"/>
</dbReference>
<dbReference type="InterPro" id="IPR040190">
    <property type="entry name" value="MURQ/GCKR"/>
</dbReference>
<dbReference type="InterPro" id="IPR001347">
    <property type="entry name" value="SIS_dom"/>
</dbReference>
<dbReference type="InterPro" id="IPR046348">
    <property type="entry name" value="SIS_dom_sf"/>
</dbReference>
<dbReference type="NCBIfam" id="TIGR00274">
    <property type="entry name" value="N-acetylmuramic acid 6-phosphate etherase"/>
    <property type="match status" value="1"/>
</dbReference>
<dbReference type="NCBIfam" id="NF003915">
    <property type="entry name" value="PRK05441.1"/>
    <property type="match status" value="1"/>
</dbReference>
<dbReference type="NCBIfam" id="NF009222">
    <property type="entry name" value="PRK12570.1"/>
    <property type="match status" value="1"/>
</dbReference>
<dbReference type="PANTHER" id="PTHR10088">
    <property type="entry name" value="GLUCOKINASE REGULATORY PROTEIN"/>
    <property type="match status" value="1"/>
</dbReference>
<dbReference type="PANTHER" id="PTHR10088:SF4">
    <property type="entry name" value="GLUCOKINASE REGULATORY PROTEIN"/>
    <property type="match status" value="1"/>
</dbReference>
<dbReference type="Pfam" id="PF22645">
    <property type="entry name" value="GKRP_SIS_N"/>
    <property type="match status" value="1"/>
</dbReference>
<dbReference type="SUPFAM" id="SSF53697">
    <property type="entry name" value="SIS domain"/>
    <property type="match status" value="1"/>
</dbReference>
<dbReference type="PROSITE" id="PS01272">
    <property type="entry name" value="GCKR"/>
    <property type="match status" value="1"/>
</dbReference>
<dbReference type="PROSITE" id="PS51464">
    <property type="entry name" value="SIS"/>
    <property type="match status" value="1"/>
</dbReference>
<reference key="1">
    <citation type="journal article" date="2003" name="Science">
        <title>Role of mobile DNA in the evolution of vancomycin-resistant Enterococcus faecalis.</title>
        <authorList>
            <person name="Paulsen I.T."/>
            <person name="Banerjei L."/>
            <person name="Myers G.S.A."/>
            <person name="Nelson K.E."/>
            <person name="Seshadri R."/>
            <person name="Read T.D."/>
            <person name="Fouts D.E."/>
            <person name="Eisen J.A."/>
            <person name="Gill S.R."/>
            <person name="Heidelberg J.F."/>
            <person name="Tettelin H."/>
            <person name="Dodson R.J."/>
            <person name="Umayam L.A."/>
            <person name="Brinkac L.M."/>
            <person name="Beanan M.J."/>
            <person name="Daugherty S.C."/>
            <person name="DeBoy R.T."/>
            <person name="Durkin S.A."/>
            <person name="Kolonay J.F."/>
            <person name="Madupu R."/>
            <person name="Nelson W.C."/>
            <person name="Vamathevan J.J."/>
            <person name="Tran B."/>
            <person name="Upton J."/>
            <person name="Hansen T."/>
            <person name="Shetty J."/>
            <person name="Khouri H.M."/>
            <person name="Utterback T.R."/>
            <person name="Radune D."/>
            <person name="Ketchum K.A."/>
            <person name="Dougherty B.A."/>
            <person name="Fraser C.M."/>
        </authorList>
    </citation>
    <scope>NUCLEOTIDE SEQUENCE [LARGE SCALE GENOMIC DNA]</scope>
    <source>
        <strain>ATCC 700802 / V583</strain>
    </source>
</reference>
<name>MURQ2_ENTFA</name>
<comment type="function">
    <text evidence="1">Specifically catalyzes the cleavage of the D-lactyl ether substituent of MurNAc 6-phosphate, producing GlcNAc 6-phosphate and D-lactate.</text>
</comment>
<comment type="catalytic activity">
    <reaction evidence="1">
        <text>N-acetyl-D-muramate 6-phosphate + H2O = N-acetyl-D-glucosamine 6-phosphate + (R)-lactate</text>
        <dbReference type="Rhea" id="RHEA:26410"/>
        <dbReference type="ChEBI" id="CHEBI:15377"/>
        <dbReference type="ChEBI" id="CHEBI:16004"/>
        <dbReference type="ChEBI" id="CHEBI:57513"/>
        <dbReference type="ChEBI" id="CHEBI:58722"/>
        <dbReference type="EC" id="4.2.1.126"/>
    </reaction>
</comment>
<comment type="pathway">
    <text evidence="1">Amino-sugar metabolism; N-acetylmuramate degradation.</text>
</comment>
<comment type="subunit">
    <text evidence="1">Homodimer.</text>
</comment>
<comment type="miscellaneous">
    <text evidence="1">A lyase-type mechanism (elimination/hydration) is suggested for the cleavage of the lactyl ether bond of MurNAc 6-phosphate, with the formation of an alpha,beta-unsaturated aldehyde intermediate with (E)-stereochemistry, followed by the syn addition of water to give product.</text>
</comment>
<comment type="similarity">
    <text evidence="1">Belongs to the GCKR-like family. MurNAc-6-P etherase subfamily.</text>
</comment>
<proteinExistence type="inferred from homology"/>
<accession>Q831R4</accession>